<keyword id="KW-0165">Cleavage on pair of basic residues</keyword>
<keyword id="KW-0903">Direct protein sequencing</keyword>
<keyword id="KW-0677">Repeat</keyword>
<keyword id="KW-0964">Secreted</keyword>
<keyword id="KW-0732">Signal</keyword>
<dbReference type="GO" id="GO:0005576">
    <property type="term" value="C:extracellular region"/>
    <property type="evidence" value="ECO:0007669"/>
    <property type="project" value="UniProtKB-SubCell"/>
</dbReference>
<organism>
    <name type="scientific">Tityus serrulatus</name>
    <name type="common">Brazilian scorpion</name>
    <dbReference type="NCBI Taxonomy" id="6887"/>
    <lineage>
        <taxon>Eukaryota</taxon>
        <taxon>Metazoa</taxon>
        <taxon>Ecdysozoa</taxon>
        <taxon>Arthropoda</taxon>
        <taxon>Chelicerata</taxon>
        <taxon>Arachnida</taxon>
        <taxon>Scorpiones</taxon>
        <taxon>Buthida</taxon>
        <taxon>Buthoidea</taxon>
        <taxon>Buthidae</taxon>
        <taxon>Tityus</taxon>
    </lineage>
</organism>
<name>PAPE_TITSE</name>
<accession>P86821</accession>
<evidence type="ECO:0000250" key="1">
    <source>
        <dbReference type="UniProtKB" id="P0C8W6"/>
    </source>
</evidence>
<evidence type="ECO:0000255" key="2"/>
<evidence type="ECO:0000256" key="3">
    <source>
        <dbReference type="SAM" id="MobiDB-lite"/>
    </source>
</evidence>
<evidence type="ECO:0000269" key="4">
    <source>
    </source>
</evidence>
<evidence type="ECO:0000269" key="5">
    <source>
    </source>
</evidence>
<evidence type="ECO:0000303" key="6">
    <source>
    </source>
</evidence>
<evidence type="ECO:0000303" key="7">
    <source>
    </source>
</evidence>
<evidence type="ECO:0000305" key="8"/>
<evidence type="ECO:0000305" key="9">
    <source>
    </source>
</evidence>
<reference key="1">
    <citation type="journal article" date="2012" name="O. J. Gen.">
        <title>Transcriptome analysis of the Tityus serrulatus scorpion venom gland.</title>
        <authorList>
            <person name="Alvarenga E.R."/>
            <person name="Mendes T.M."/>
            <person name="Magalhaes B.F."/>
            <person name="Siqueira F.F."/>
            <person name="Dantas A.E."/>
            <person name="Barroca T.M."/>
            <person name="Horta C.C."/>
            <person name="Kalapothakis E."/>
        </authorList>
    </citation>
    <scope>NUCLEOTIDE SEQUENCE [MRNA]</scope>
    <source>
        <tissue>Venom gland</tissue>
    </source>
</reference>
<reference key="2">
    <citation type="journal article" date="2008" name="Toxicon">
        <title>Tityus serrulatus venom peptidomics: assessing venom peptide diversity.</title>
        <authorList>
            <person name="Rates B."/>
            <person name="Ferraz K.K."/>
            <person name="Borges M.H."/>
            <person name="Richardson M."/>
            <person name="De Lima M.E."/>
            <person name="Pimenta A.M."/>
        </authorList>
    </citation>
    <scope>PROTEIN SEQUENCE OF 46-83</scope>
    <scope>SUBCELLULAR LOCATION</scope>
    <source>
        <tissue>Venom</tissue>
    </source>
</reference>
<reference key="3">
    <citation type="journal article" date="2014" name="Toxicon">
        <title>Influence of post-starvation extraction time and prey-specific diet in Tityus serrulatus scorpion venom composition and hyaluronidase activity.</title>
        <authorList>
            <person name="Pucca M.B."/>
            <person name="Amorim F.G."/>
            <person name="Cerni F.A."/>
            <person name="Bordon K.C.F."/>
            <person name="Cardoso I.A."/>
            <person name="Anjolette F.A."/>
            <person name="Arantes E.C."/>
        </authorList>
    </citation>
    <scope>PROTEIN SEQUENCE OF 46-65</scope>
    <scope>SUBCELLULAR LOCATION</scope>
    <source>
        <tissue evidence="7">Venom</tissue>
    </source>
</reference>
<proteinExistence type="evidence at protein level"/>
<feature type="signal peptide" evidence="2">
    <location>
        <begin position="1"/>
        <end position="22"/>
    </location>
</feature>
<feature type="propeptide" id="PRO_0000455733" evidence="8">
    <location>
        <begin position="23"/>
        <end position="45"/>
    </location>
</feature>
<feature type="chain" id="PRO_0000401165" description="Pape peptide">
    <location>
        <begin position="46"/>
        <end position="83"/>
    </location>
</feature>
<feature type="repeat" description="PAPE 1" evidence="8">
    <location>
        <begin position="57"/>
        <end position="60"/>
    </location>
</feature>
<feature type="repeat" description="PAPE 2" evidence="8">
    <location>
        <begin position="61"/>
        <end position="64"/>
    </location>
</feature>
<feature type="repeat" description="PAPE 3" evidence="8">
    <location>
        <begin position="65"/>
        <end position="68"/>
    </location>
</feature>
<feature type="region of interest" description="Disordered" evidence="3">
    <location>
        <begin position="49"/>
        <end position="88"/>
    </location>
</feature>
<feature type="compositionally biased region" description="Pro residues" evidence="3">
    <location>
        <begin position="56"/>
        <end position="68"/>
    </location>
</feature>
<feature type="compositionally biased region" description="Low complexity" evidence="3">
    <location>
        <begin position="69"/>
        <end position="81"/>
    </location>
</feature>
<comment type="subcellular location">
    <subcellularLocation>
        <location evidence="4 5">Secreted</location>
    </subcellularLocation>
</comment>
<comment type="tissue specificity">
    <text evidence="9">Expressed by the venom gland.</text>
</comment>
<protein>
    <recommendedName>
        <fullName evidence="1 6">Pape peptide</fullName>
    </recommendedName>
</protein>
<sequence>MNRKTLLVIFFVTLLIAEEVNSFRLGGFLKKIWRSKLVKRLRSKGKQLLKEALAPEPAPEPAPEPAPEAAPEAAPEPAAAAPERRRRR</sequence>